<reference key="1">
    <citation type="journal article" date="1997" name="Biochem. Biophys. Res. Commun.">
        <title>Molecular characterization of the novel basic helix-loop-helix protein DEC1 expressed in differentiated human embryo chondrocytes.</title>
        <authorList>
            <person name="Shen M."/>
            <person name="Kawamoto T."/>
            <person name="Yan W."/>
            <person name="Nakamasu K."/>
            <person name="Tamagami M."/>
            <person name="Koyano Y."/>
            <person name="Noshiro M."/>
            <person name="Kato Y."/>
        </authorList>
    </citation>
    <scope>NUCLEOTIDE SEQUENCE [MRNA]</scope>
    <source>
        <tissue>Cartilage</tissue>
    </source>
</reference>
<reference key="2">
    <citation type="journal article" date="2001" name="J. Biochem.">
        <title>Gene structure and chromosomal location of a human bHLH transcriptional factor DEC1 x Stra13 x SHARP-2/BHLHB2.</title>
        <authorList>
            <person name="Teramoto M."/>
            <person name="Nakamasu K."/>
            <person name="Noshiro M."/>
            <person name="Matsuda Y."/>
            <person name="Gotoh O."/>
            <person name="Shen M."/>
            <person name="Tsutsumi S."/>
            <person name="Kawamoto T."/>
            <person name="Iwamoto Y."/>
            <person name="Kato Y."/>
        </authorList>
    </citation>
    <scope>NUCLEOTIDE SEQUENCE [GENOMIC DNA]</scope>
    <source>
        <tissue>Leukocyte</tissue>
    </source>
</reference>
<reference key="3">
    <citation type="journal article" date="2004" name="Genome Res.">
        <title>The status, quality, and expansion of the NIH full-length cDNA project: the Mammalian Gene Collection (MGC).</title>
        <authorList>
            <consortium name="The MGC Project Team"/>
        </authorList>
    </citation>
    <scope>NUCLEOTIDE SEQUENCE [LARGE SCALE MRNA]</scope>
    <source>
        <tissue>Skin</tissue>
    </source>
</reference>
<reference key="4">
    <citation type="submission" date="2001-02" db="EMBL/GenBank/DDBJ databases">
        <title>Exon-intron structure of the human STRA13(DEC1) bHLH transcription factor gene.</title>
        <authorList>
            <person name="Ivanov S.V."/>
            <person name="Lerman M.I."/>
        </authorList>
    </citation>
    <scope>NUCLEOTIDE SEQUENCE [GENOMIC DNA] OF 4-412</scope>
</reference>
<reference key="5">
    <citation type="journal article" date="2001" name="J. Biol. Chem.">
        <title>Regulation of STRA13 by the von Hippel-Lindau tumor suppressor protein, hypoxia, and the UBC9/ubiquitin proteasome degradation pathway.</title>
        <authorList>
            <person name="Ivanova A.V."/>
            <person name="Ivanov S.V."/>
            <person name="Danilkovitch-Miagkova A."/>
            <person name="Lerman M.I."/>
        </authorList>
    </citation>
    <scope>UBIQUITINATION</scope>
    <scope>INTERACTION WITH UBE2I</scope>
    <scope>SUBCELLULAR LOCATION</scope>
</reference>
<reference key="6">
    <citation type="journal article" date="2002" name="Nature">
        <title>Dec1 and Dec2 are regulators of the mammalian molecular clock.</title>
        <authorList>
            <person name="Honma S."/>
            <person name="Kawamoto T."/>
            <person name="Takagi Y."/>
            <person name="Fujimoto K."/>
            <person name="Sato F."/>
            <person name="Noshiro M."/>
            <person name="Kato Y."/>
            <person name="Honma K.I."/>
        </authorList>
    </citation>
    <scope>FUNCTION</scope>
    <scope>INTERACTION WITH BMAL1</scope>
</reference>
<reference key="7">
    <citation type="journal article" date="2004" name="Biochem. Biophys. Res. Commun.">
        <title>A novel autofeedback loop of Dec1 transcription involved in circadian rhythm regulation.</title>
        <authorList>
            <person name="Kawamoto T."/>
            <person name="Noshiro M."/>
            <person name="Sato F."/>
            <person name="Maemura K."/>
            <person name="Takeda N."/>
            <person name="Nagai R."/>
            <person name="Iwata T."/>
            <person name="Fujimoto K."/>
            <person name="Furukawa M."/>
            <person name="Miyazaki K."/>
            <person name="Honma S."/>
            <person name="Honma K.I."/>
            <person name="Kato Y."/>
        </authorList>
    </citation>
    <scope>FUNCTION</scope>
</reference>
<reference key="8">
    <citation type="journal article" date="2004" name="Biochem. J.">
        <title>DNA binding, but not interaction with Bmal1, is responsible for DEC1-mediated transcription regulation of the circadian gene mPer1.</title>
        <authorList>
            <person name="Li Y."/>
            <person name="Song X."/>
            <person name="Ma Y."/>
            <person name="Liu J."/>
            <person name="Yang D."/>
            <person name="Yan B."/>
        </authorList>
    </citation>
    <scope>FUNCTION</scope>
    <scope>HETERODIMERIZATION WITH BHLHE41/DEC2</scope>
    <scope>INTERACTION WITH BMAL1</scope>
</reference>
<reference key="9">
    <citation type="journal article" date="2004" name="Eur. J. Biochem.">
        <title>Functional analysis of the basic helix-loop-helix transcription factor DEC1 in circadian regulation. Interaction with BMAL1.</title>
        <authorList>
            <person name="Sato F."/>
            <person name="Kawamoto T."/>
            <person name="Fujimoto K."/>
            <person name="Noshiro M."/>
            <person name="Honda K.K."/>
            <person name="Honma S."/>
            <person name="Honma K."/>
            <person name="Kato Y."/>
        </authorList>
    </citation>
    <scope>FUNCTION</scope>
    <scope>INTERACTION WITH BMAL1</scope>
    <scope>MUTAGENESIS OF HIS-57 AND ARG-65</scope>
</reference>
<reference key="10">
    <citation type="journal article" date="2008" name="Mol. Cell. Biol.">
        <title>DEC1 modulates the circadian phase of clock gene expression.</title>
        <authorList>
            <person name="Nakashima A."/>
            <person name="Kawamoto T."/>
            <person name="Honda K.K."/>
            <person name="Ueshima T."/>
            <person name="Noshiro M."/>
            <person name="Iwata T."/>
            <person name="Fujimoto K."/>
            <person name="Kubo H."/>
            <person name="Honma S."/>
            <person name="Yorioka N."/>
            <person name="Kohno N."/>
            <person name="Kato Y."/>
        </authorList>
    </citation>
    <scope>FUNCTION</scope>
</reference>
<reference key="11">
    <citation type="journal article" date="2009" name="Mol. Pharmacol.">
        <title>The basic helix-loop-helix proteins differentiated embryo chondrocyte (DEC) 1 and DEC2 function as corepressors of retinoid X receptors.</title>
        <authorList>
            <person name="Cho Y."/>
            <person name="Noshiro M."/>
            <person name="Choi M."/>
            <person name="Morita K."/>
            <person name="Kawamoto T."/>
            <person name="Fujimoto K."/>
            <person name="Kato Y."/>
            <person name="Makishima M."/>
        </authorList>
    </citation>
    <scope>FUNCTION</scope>
    <scope>INTERACTION WITH RXRA</scope>
    <scope>MUTAGENESIS OF 78-LEU-LEU-79</scope>
</reference>
<reference key="12">
    <citation type="journal article" date="2011" name="PLoS ONE">
        <title>SUMOylation of DEC1 protein regulates its transcriptional activity and enhances its stability.</title>
        <authorList>
            <person name="Hong Y."/>
            <person name="Xing X."/>
            <person name="Li S."/>
            <person name="Bi H."/>
            <person name="Yang C."/>
            <person name="Zhao F."/>
            <person name="Liu Y."/>
            <person name="Ao X."/>
            <person name="Chang A.K."/>
            <person name="Wu H."/>
        </authorList>
    </citation>
    <scope>SUMOYLATION AT LYS-159 AND LYS-279</scope>
    <scope>INTERACTION WITH HDAC1 AND SUMO1</scope>
    <scope>SUBCELLULAR LOCATION</scope>
    <scope>MUTAGENESIS OF LYS-159 AND LYS-279</scope>
</reference>
<reference key="13">
    <citation type="journal article" date="2013" name="J. Proteome Res.">
        <title>Toward a comprehensive characterization of a human cancer cell phosphoproteome.</title>
        <authorList>
            <person name="Zhou H."/>
            <person name="Di Palma S."/>
            <person name="Preisinger C."/>
            <person name="Peng M."/>
            <person name="Polat A.N."/>
            <person name="Heck A.J."/>
            <person name="Mohammed S."/>
        </authorList>
    </citation>
    <scope>PHOSPHORYLATION [LARGE SCALE ANALYSIS] AT SER-235</scope>
    <scope>IDENTIFICATION BY MASS SPECTROMETRY [LARGE SCALE ANALYSIS]</scope>
    <source>
        <tissue>Erythroleukemia</tissue>
    </source>
</reference>
<reference key="14">
    <citation type="journal article" date="2014" name="Nat. Struct. Mol. Biol.">
        <title>Uncovering global SUMOylation signaling networks in a site-specific manner.</title>
        <authorList>
            <person name="Hendriks I.A."/>
            <person name="D'Souza R.C."/>
            <person name="Yang B."/>
            <person name="Verlaan-de Vries M."/>
            <person name="Mann M."/>
            <person name="Vertegaal A.C."/>
        </authorList>
    </citation>
    <scope>SUMOYLATION [LARGE SCALE ANALYSIS] AT LYS-279</scope>
    <scope>IDENTIFICATION BY MASS SPECTROMETRY [LARGE SCALE ANALYSIS]</scope>
</reference>
<reference key="15">
    <citation type="journal article" date="2014" name="Proc. Natl. Acad. Sci. U.S.A.">
        <title>Mapping of SUMO sites and analysis of SUMOylation changes induced by external stimuli.</title>
        <authorList>
            <person name="Impens F."/>
            <person name="Radoshevich L."/>
            <person name="Cossart P."/>
            <person name="Ribet D."/>
        </authorList>
    </citation>
    <scope>SUMOYLATION [LARGE SCALE ANALYSIS] AT LYS-279</scope>
    <scope>IDENTIFICATION BY MASS SPECTROMETRY [LARGE SCALE ANALYSIS]</scope>
</reference>
<reference key="16">
    <citation type="journal article" date="2015" name="Cell Rep.">
        <title>SUMO-2 orchestrates chromatin modifiers in response to DNA damage.</title>
        <authorList>
            <person name="Hendriks I.A."/>
            <person name="Treffers L.W."/>
            <person name="Verlaan-de Vries M."/>
            <person name="Olsen J.V."/>
            <person name="Vertegaal A.C."/>
        </authorList>
    </citation>
    <scope>SUMOYLATION [LARGE SCALE ANALYSIS] AT LYS-279</scope>
    <scope>IDENTIFICATION BY MASS SPECTROMETRY [LARGE SCALE ANALYSIS]</scope>
</reference>
<reference key="17">
    <citation type="journal article" date="2015" name="Mol. Cell. Proteomics">
        <title>System-wide analysis of SUMOylation dynamics in response to replication stress reveals novel small ubiquitin-like modified target proteins and acceptor lysines relevant for genome stability.</title>
        <authorList>
            <person name="Xiao Z."/>
            <person name="Chang J.G."/>
            <person name="Hendriks I.A."/>
            <person name="Sigurdsson J.O."/>
            <person name="Olsen J.V."/>
            <person name="Vertegaal A.C."/>
        </authorList>
    </citation>
    <scope>SUMOYLATION [LARGE SCALE ANALYSIS] AT LYS-279</scope>
    <scope>IDENTIFICATION BY MASS SPECTROMETRY [LARGE SCALE ANALYSIS]</scope>
</reference>
<reference key="18">
    <citation type="journal article" date="2017" name="Arch. Biochem. Biophys.">
        <title>Circadian rhythmicity: A functional connection between differentiated embryonic chondrocyte-1 (DEC1) and small heterodimer partner (SHP).</title>
        <authorList>
            <person name="Marczak M.M."/>
            <person name="Yan B."/>
        </authorList>
    </citation>
    <scope>FUNCTION</scope>
    <scope>SUBCELLULAR LOCATION</scope>
    <scope>MUTAGENESIS OF PRO-56 AND ARG-58</scope>
</reference>
<reference key="19">
    <citation type="journal article" date="2017" name="Nat. Struct. Mol. Biol.">
        <title>Site-specific mapping of the human SUMO proteome reveals co-modification with phosphorylation.</title>
        <authorList>
            <person name="Hendriks I.A."/>
            <person name="Lyon D."/>
            <person name="Young C."/>
            <person name="Jensen L.J."/>
            <person name="Vertegaal A.C."/>
            <person name="Nielsen M.L."/>
        </authorList>
    </citation>
    <scope>SUMOYLATION [LARGE SCALE ANALYSIS] AT LYS-167; LYS-279 AND LYS-288</scope>
    <scope>IDENTIFICATION BY MASS SPECTROMETRY [LARGE SCALE ANALYSIS]</scope>
</reference>
<reference key="20">
    <citation type="journal article" date="2018" name="Hypertension">
        <title>Dec1 and CLOCK regulate Na+/K+-ATPase beta1 subunit expression and blood pressure.</title>
        <authorList>
            <person name="Nakashima A."/>
            <person name="Kawamoto T."/>
            <person name="Noshiro M."/>
            <person name="Ueno T."/>
            <person name="Doi S."/>
            <person name="Honda K."/>
            <person name="Maruhashi T."/>
            <person name="Noma K."/>
            <person name="Honma S."/>
            <person name="Masaki T."/>
            <person name="Higashi Y."/>
            <person name="Kato Y."/>
        </authorList>
    </citation>
    <scope>FUNCTION</scope>
</reference>
<sequence length="412" mass="45510">MERIPSAQPPPACLPKAPGLEHGDLPGMYPAHMYQVYKSRRGIKRSEDSKETYKLPHRLIEKKRRDRINECIAQLKDLLPEHLKLTTLGHLEKAVVLELTLKHVKALTNLIDQQQQKIIALQSGLQAGELSGRNVETGQEMFCSGFQTCAREVLQYLAKHENTRDLKSSQLVTHLHRVVSELLQGGTSRKPSDPAPKVMDFKEKPSSPAKGSEGPGKNCVPVIQRTFAHSSGEQSGSDTDTDSGYGGESEKGDLRSEQPCFKSDHGRRFTMGERIGAIKQESEEPPTKKNRMQLSDDEGHFTSSDLISSPFLGPHPHQPPFCLPFYLIPPSATAYLPMLEKCWYPTSVPVLYPGLNASAAALSSFMNPDKISAPLLMPQRLPSPLPAHPSVDSSVLLQALKPIPPLNLETKD</sequence>
<comment type="function">
    <text evidence="6 7 8 9 10 11 13 14">Transcriptional repressor involved in the regulation of the circadian rhythm by negatively regulating the activity of the clock genes and clock-controlled genes (PubMed:12397359, PubMed:18411297). Acts as the negative limb of a novel autoregulatory feedback loop (DEC loop) which differs from the one formed by the PER and CRY transcriptional repressors (PER/CRY loop) (PubMed:14672706). Both these loops are interlocked as it represses the expression of PER1/2 and in turn is repressed by PER1/2 and CRY1/2 (PubMed:15193144). Represses the activity of the circadian transcriptional activator: CLOCK-BMAL1|BMAL2 heterodimer by competing for the binding to E-box elements (5'-CACGTG-3') found within the promoters of its target genes (PubMed:15560782). Negatively regulates its own expression and the expression of DBP and BHLHE41/DEC2 (PubMed:14672706). Acts as a corepressor of RXR and the RXR-LXR heterodimers and represses the ligand-induced RXRA and NR1H3/LXRA transactivation activity (PubMed:19786558). May be involved in the regulation of chondrocyte differentiation via the cAMP pathway (PubMed:19786558). Represses the transcription of NR0B2 and attentuates the transactivation of NR0B2 by the CLOCK-BMAL1 complex (PubMed:28797635). Drives the circadian rhythm of blood pressure through transcriptional repression of ATP1B1 in the cardiovascular system (PubMed:30012868).</text>
</comment>
<comment type="subunit">
    <text evidence="5 6 8 9 11 12">Homodimer. Heterodimer with BHLHE41/DEC2. Interacts with TCF3/E47. Interacts with ubiquitin-conjugating enzyme UBE2I/UBC9. Interacts with HDAC1, SUMO1, RXRA and BMAL1.</text>
</comment>
<comment type="interaction">
    <interactant intactId="EBI-711810">
        <id>O14503</id>
    </interactant>
    <interactant intactId="EBI-10176499">
        <id>C9JG97</id>
        <label>AAMP</label>
    </interactant>
    <organismsDiffer>false</organismsDiffer>
    <experiments>3</experiments>
</comment>
<comment type="interaction">
    <interactant intactId="EBI-711810">
        <id>O14503</id>
    </interactant>
    <interactant intactId="EBI-7451846">
        <id>Q16613</id>
        <label>AANAT</label>
    </interactant>
    <organismsDiffer>false</organismsDiffer>
    <experiments>6</experiments>
</comment>
<comment type="interaction">
    <interactant intactId="EBI-711810">
        <id>O14503</id>
    </interactant>
    <interactant intactId="EBI-930964">
        <id>P54253</id>
        <label>ATXN1</label>
    </interactant>
    <organismsDiffer>false</organismsDiffer>
    <experiments>3</experiments>
</comment>
<comment type="interaction">
    <interactant intactId="EBI-711810">
        <id>O14503</id>
    </interactant>
    <interactant intactId="EBI-358049">
        <id>Q13895</id>
        <label>BYSL</label>
    </interactant>
    <organismsDiffer>false</organismsDiffer>
    <experiments>3</experiments>
</comment>
<comment type="interaction">
    <interactant intactId="EBI-711810">
        <id>O14503</id>
    </interactant>
    <interactant intactId="EBI-739806">
        <id>O75909</id>
        <label>CCNK</label>
    </interactant>
    <organismsDiffer>false</organismsDiffer>
    <experiments>3</experiments>
</comment>
<comment type="interaction">
    <interactant intactId="EBI-711810">
        <id>O14503</id>
    </interactant>
    <interactant intactId="EBI-2802782">
        <id>Q6NVV7</id>
        <label>CDPF1</label>
    </interactant>
    <organismsDiffer>false</organismsDiffer>
    <experiments>3</experiments>
</comment>
<comment type="interaction">
    <interactant intactId="EBI-711810">
        <id>O14503</id>
    </interactant>
    <interactant intactId="EBI-1053725">
        <id>P10606</id>
        <label>COX5B</label>
    </interactant>
    <organismsDiffer>false</organismsDiffer>
    <experiments>4</experiments>
</comment>
<comment type="interaction">
    <interactant intactId="EBI-711810">
        <id>O14503</id>
    </interactant>
    <interactant intactId="EBI-12884642">
        <id>Q03060-25</id>
        <label>CREM</label>
    </interactant>
    <organismsDiffer>false</organismsDiffer>
    <experiments>3</experiments>
</comment>
<comment type="interaction">
    <interactant intactId="EBI-711810">
        <id>O14503</id>
    </interactant>
    <interactant intactId="EBI-7875264">
        <id>O75553</id>
        <label>DAB1</label>
    </interactant>
    <organismsDiffer>false</organismsDiffer>
    <experiments>3</experiments>
</comment>
<comment type="interaction">
    <interactant intactId="EBI-711810">
        <id>O14503</id>
    </interactant>
    <interactant intactId="EBI-724310">
        <id>Q15038</id>
        <label>DAZAP2</label>
    </interactant>
    <organismsDiffer>false</organismsDiffer>
    <experiments>5</experiments>
</comment>
<comment type="interaction">
    <interactant intactId="EBI-711810">
        <id>O14503</id>
    </interactant>
    <interactant intactId="EBI-739789">
        <id>Q92997</id>
        <label>DVL3</label>
    </interactant>
    <organismsDiffer>false</organismsDiffer>
    <experiments>3</experiments>
</comment>
<comment type="interaction">
    <interactant intactId="EBI-711810">
        <id>O14503</id>
    </interactant>
    <interactant intactId="EBI-2339219">
        <id>Q08426</id>
        <label>EHHADH</label>
    </interactant>
    <organismsDiffer>false</organismsDiffer>
    <experiments>3</experiments>
</comment>
<comment type="interaction">
    <interactant intactId="EBI-711810">
        <id>O14503</id>
    </interactant>
    <interactant intactId="EBI-1384254">
        <id>Q86UY5</id>
        <label>FAM83A</label>
    </interactant>
    <organismsDiffer>false</organismsDiffer>
    <experiments>6</experiments>
</comment>
<comment type="interaction">
    <interactant intactId="EBI-711810">
        <id>O14503</id>
    </interactant>
    <interactant intactId="EBI-745707">
        <id>Q8NEA9</id>
        <label>GMCL2</label>
    </interactant>
    <organismsDiffer>false</organismsDiffer>
    <experiments>3</experiments>
</comment>
<comment type="interaction">
    <interactant intactId="EBI-711810">
        <id>O14503</id>
    </interactant>
    <interactant intactId="EBI-10261098">
        <id>Q86YR5-3</id>
        <label>GPSM1</label>
    </interactant>
    <organismsDiffer>false</organismsDiffer>
    <experiments>3</experiments>
</comment>
<comment type="interaction">
    <interactant intactId="EBI-711810">
        <id>O14503</id>
    </interactant>
    <interactant intactId="EBI-9478422">
        <id>Q96G42</id>
        <label>KLHDC7B</label>
    </interactant>
    <organismsDiffer>false</organismsDiffer>
    <experiments>3</experiments>
</comment>
<comment type="interaction">
    <interactant intactId="EBI-711810">
        <id>O14503</id>
    </interactant>
    <interactant intactId="EBI-11749135">
        <id>Q8IUG1</id>
        <label>KRTAP1-3</label>
    </interactant>
    <organismsDiffer>false</organismsDiffer>
    <experiments>3</experiments>
</comment>
<comment type="interaction">
    <interactant intactId="EBI-711810">
        <id>O14503</id>
    </interactant>
    <interactant intactId="EBI-12811111">
        <id>Q8IUB9</id>
        <label>KRTAP19-1</label>
    </interactant>
    <organismsDiffer>false</organismsDiffer>
    <experiments>3</experiments>
</comment>
<comment type="interaction">
    <interactant intactId="EBI-711810">
        <id>O14503</id>
    </interactant>
    <interactant intactId="EBI-1048945">
        <id>Q3LI72</id>
        <label>KRTAP19-5</label>
    </interactant>
    <organismsDiffer>false</organismsDiffer>
    <experiments>3</experiments>
</comment>
<comment type="interaction">
    <interactant intactId="EBI-711810">
        <id>O14503</id>
    </interactant>
    <interactant intactId="EBI-10241353">
        <id>Q3SYF9</id>
        <label>KRTAP19-7</label>
    </interactant>
    <organismsDiffer>false</organismsDiffer>
    <experiments>3</experiments>
</comment>
<comment type="interaction">
    <interactant intactId="EBI-711810">
        <id>O14503</id>
    </interactant>
    <interactant intactId="EBI-10171734">
        <id>A1A580</id>
        <label>KRTAP23-1</label>
    </interactant>
    <organismsDiffer>false</organismsDiffer>
    <experiments>3</experiments>
</comment>
<comment type="interaction">
    <interactant intactId="EBI-711810">
        <id>O14503</id>
    </interactant>
    <interactant intactId="EBI-12111050">
        <id>Q3LI64</id>
        <label>KRTAP6-1</label>
    </interactant>
    <organismsDiffer>false</organismsDiffer>
    <experiments>3</experiments>
</comment>
<comment type="interaction">
    <interactant intactId="EBI-711810">
        <id>O14503</id>
    </interactant>
    <interactant intactId="EBI-11962084">
        <id>Q3LI66</id>
        <label>KRTAP6-2</label>
    </interactant>
    <organismsDiffer>false</organismsDiffer>
    <experiments>3</experiments>
</comment>
<comment type="interaction">
    <interactant intactId="EBI-711810">
        <id>O14503</id>
    </interactant>
    <interactant intactId="EBI-10261141">
        <id>Q8IUC2</id>
        <label>KRTAP8-1</label>
    </interactant>
    <organismsDiffer>false</organismsDiffer>
    <experiments>3</experiments>
</comment>
<comment type="interaction">
    <interactant intactId="EBI-711810">
        <id>O14503</id>
    </interactant>
    <interactant intactId="EBI-10255841">
        <id>Q71RC2-6</id>
        <label>LARP4</label>
    </interactant>
    <organismsDiffer>false</organismsDiffer>
    <experiments>3</experiments>
</comment>
<comment type="interaction">
    <interactant intactId="EBI-711810">
        <id>O14503</id>
    </interactant>
    <interactant intactId="EBI-9088686">
        <id>Q14847-2</id>
        <label>LASP1</label>
    </interactant>
    <organismsDiffer>false</organismsDiffer>
    <experiments>3</experiments>
</comment>
<comment type="interaction">
    <interactant intactId="EBI-711810">
        <id>O14503</id>
    </interactant>
    <interactant intactId="EBI-11742507">
        <id>Q8TAP4-4</id>
        <label>LMO3</label>
    </interactant>
    <organismsDiffer>false</organismsDiffer>
    <experiments>3</experiments>
</comment>
<comment type="interaction">
    <interactant intactId="EBI-711810">
        <id>O14503</id>
    </interactant>
    <interactant intactId="EBI-716006">
        <id>Q9Y5V3</id>
        <label>MAGED1</label>
    </interactant>
    <organismsDiffer>false</organismsDiffer>
    <experiments>6</experiments>
</comment>
<comment type="interaction">
    <interactant intactId="EBI-711810">
        <id>O14503</id>
    </interactant>
    <interactant intactId="EBI-348259">
        <id>Q96EZ8</id>
        <label>MCRS1</label>
    </interactant>
    <organismsDiffer>false</organismsDiffer>
    <experiments>3</experiments>
</comment>
<comment type="interaction">
    <interactant intactId="EBI-711810">
        <id>O14503</id>
    </interactant>
    <interactant intactId="EBI-14083835">
        <id>O94964-4</id>
        <label>MTCL2</label>
    </interactant>
    <organismsDiffer>false</organismsDiffer>
    <experiments>3</experiments>
</comment>
<comment type="interaction">
    <interactant intactId="EBI-711810">
        <id>O14503</id>
    </interactant>
    <interactant intactId="EBI-1052523">
        <id>Q9GZZ1</id>
        <label>NAA50</label>
    </interactant>
    <organismsDiffer>false</organismsDiffer>
    <experiments>6</experiments>
</comment>
<comment type="interaction">
    <interactant intactId="EBI-711810">
        <id>O14503</id>
    </interactant>
    <interactant intactId="EBI-11750983">
        <id>Q9HC98-4</id>
        <label>NEK6</label>
    </interactant>
    <organismsDiffer>false</organismsDiffer>
    <experiments>3</experiments>
</comment>
<comment type="interaction">
    <interactant intactId="EBI-711810">
        <id>O14503</id>
    </interactant>
    <interactant intactId="EBI-395927">
        <id>Q9BVI4</id>
        <label>NOC4L</label>
    </interactant>
    <organismsDiffer>false</organismsDiffer>
    <experiments>3</experiments>
</comment>
<comment type="interaction">
    <interactant intactId="EBI-711810">
        <id>O14503</id>
    </interactant>
    <interactant intactId="EBI-2622029">
        <id>P18545</id>
        <label>PDE6G</label>
    </interactant>
    <organismsDiffer>false</organismsDiffer>
    <experiments>3</experiments>
</comment>
<comment type="interaction">
    <interactant intactId="EBI-711810">
        <id>O14503</id>
    </interactant>
    <interactant intactId="EBI-357275">
        <id>Q99471</id>
        <label>PFDN5</label>
    </interactant>
    <organismsDiffer>false</organismsDiffer>
    <experiments>3</experiments>
</comment>
<comment type="interaction">
    <interactant intactId="EBI-711810">
        <id>O14503</id>
    </interactant>
    <interactant intactId="EBI-530034">
        <id>O43189</id>
        <label>PHF1</label>
    </interactant>
    <organismsDiffer>false</organismsDiffer>
    <experiments>3</experiments>
</comment>
<comment type="interaction">
    <interactant intactId="EBI-711810">
        <id>O14503</id>
    </interactant>
    <interactant intactId="EBI-373552">
        <id>Q96CS7</id>
        <label>PLEKHB2</label>
    </interactant>
    <organismsDiffer>false</organismsDiffer>
    <experiments>3</experiments>
</comment>
<comment type="interaction">
    <interactant intactId="EBI-711810">
        <id>O14503</id>
    </interactant>
    <interactant intactId="EBI-12029004">
        <id>P78424</id>
        <label>POU6F2</label>
    </interactant>
    <organismsDiffer>false</organismsDiffer>
    <experiments>3</experiments>
</comment>
<comment type="interaction">
    <interactant intactId="EBI-711810">
        <id>O14503</id>
    </interactant>
    <interactant intactId="EBI-1181405">
        <id>Q13131</id>
        <label>PRKAA1</label>
    </interactant>
    <organismsDiffer>false</organismsDiffer>
    <experiments>3</experiments>
</comment>
<comment type="interaction">
    <interactant intactId="EBI-711810">
        <id>O14503</id>
    </interactant>
    <interactant intactId="EBI-12754095">
        <id>P86480</id>
        <label>PRR20D</label>
    </interactant>
    <organismsDiffer>false</organismsDiffer>
    <experiments>3</experiments>
</comment>
<comment type="interaction">
    <interactant intactId="EBI-711810">
        <id>O14503</id>
    </interactant>
    <interactant intactId="EBI-948156">
        <id>Q9Y4B4</id>
        <label>RAD54L2</label>
    </interactant>
    <organismsDiffer>false</organismsDiffer>
    <experiments>3</experiments>
</comment>
<comment type="interaction">
    <interactant intactId="EBI-711810">
        <id>O14503</id>
    </interactant>
    <interactant intactId="EBI-12123390">
        <id>Q9NWB1-5</id>
        <label>RBFOX1</label>
    </interactant>
    <organismsDiffer>false</organismsDiffer>
    <experiments>3</experiments>
</comment>
<comment type="interaction">
    <interactant intactId="EBI-711810">
        <id>O14503</id>
    </interactant>
    <interactant intactId="EBI-780319">
        <id>Q86U06</id>
        <label>RBM23</label>
    </interactant>
    <organismsDiffer>false</organismsDiffer>
    <experiments>3</experiments>
</comment>
<comment type="interaction">
    <interactant intactId="EBI-711810">
        <id>O14503</id>
    </interactant>
    <interactant intactId="EBI-10258579">
        <id>Q86U06-2</id>
        <label>RBM23</label>
    </interactant>
    <organismsDiffer>false</organismsDiffer>
    <experiments>3</experiments>
</comment>
<comment type="interaction">
    <interactant intactId="EBI-711810">
        <id>O14503</id>
    </interactant>
    <interactant intactId="EBI-740322">
        <id>Q93062</id>
        <label>RBPMS</label>
    </interactant>
    <organismsDiffer>false</organismsDiffer>
    <experiments>3</experiments>
</comment>
<comment type="interaction">
    <interactant intactId="EBI-711810">
        <id>O14503</id>
    </interactant>
    <interactant intactId="EBI-11987469">
        <id>Q6ZRY4</id>
        <label>RBPMS2</label>
    </interactant>
    <organismsDiffer>false</organismsDiffer>
    <experiments>3</experiments>
</comment>
<comment type="interaction">
    <interactant intactId="EBI-711810">
        <id>O14503</id>
    </interactant>
    <interactant intactId="EBI-2367123">
        <id>O94955</id>
        <label>RHOBTB3</label>
    </interactant>
    <organismsDiffer>false</organismsDiffer>
    <experiments>7</experiments>
</comment>
<comment type="interaction">
    <interactant intactId="EBI-711810">
        <id>O14503</id>
    </interactant>
    <interactant intactId="EBI-6285694">
        <id>Q9H4E5</id>
        <label>RHOJ</label>
    </interactant>
    <organismsDiffer>false</organismsDiffer>
    <experiments>3</experiments>
</comment>
<comment type="interaction">
    <interactant intactId="EBI-711810">
        <id>O14503</id>
    </interactant>
    <interactant intactId="EBI-6422642">
        <id>Q01974</id>
        <label>ROR2</label>
    </interactant>
    <organismsDiffer>false</organismsDiffer>
    <experiments>3</experiments>
</comment>
<comment type="interaction">
    <interactant intactId="EBI-711810">
        <id>O14503</id>
    </interactant>
    <interactant intactId="EBI-78598">
        <id>P19793</id>
        <label>RXRA</label>
    </interactant>
    <organismsDiffer>false</organismsDiffer>
    <experiments>4</experiments>
</comment>
<comment type="interaction">
    <interactant intactId="EBI-711810">
        <id>O14503</id>
    </interactant>
    <interactant intactId="EBI-2822515">
        <id>Q8WU79</id>
        <label>SMAP2</label>
    </interactant>
    <organismsDiffer>false</organismsDiffer>
    <experiments>3</experiments>
</comment>
<comment type="interaction">
    <interactant intactId="EBI-711810">
        <id>O14503</id>
    </interactant>
    <interactant intactId="EBI-8463848">
        <id>Q8NB12</id>
        <label>SMYD1</label>
    </interactant>
    <organismsDiffer>false</organismsDiffer>
    <experiments>8</experiments>
</comment>
<comment type="interaction">
    <interactant intactId="EBI-711810">
        <id>O14503</id>
    </interactant>
    <interactant intactId="EBI-5452954">
        <id>O60248</id>
        <label>SOX15</label>
    </interactant>
    <organismsDiffer>false</organismsDiffer>
    <experiments>3</experiments>
</comment>
<comment type="interaction">
    <interactant intactId="EBI-711810">
        <id>O14503</id>
    </interactant>
    <interactant intactId="EBI-10176124">
        <id>B7ZLI8</id>
        <label>STK19</label>
    </interactant>
    <organismsDiffer>false</organismsDiffer>
    <experiments>6</experiments>
</comment>
<comment type="interaction">
    <interactant intactId="EBI-711810">
        <id>O14503</id>
    </interactant>
    <interactant intactId="EBI-752030">
        <id>Q96A09</id>
        <label>TENT5B</label>
    </interactant>
    <organismsDiffer>false</organismsDiffer>
    <experiments>3</experiments>
</comment>
<comment type="interaction">
    <interactant intactId="EBI-711810">
        <id>O14503</id>
    </interactant>
    <interactant intactId="EBI-717810">
        <id>Q08117</id>
        <label>TLE5</label>
    </interactant>
    <organismsDiffer>false</organismsDiffer>
    <experiments>3</experiments>
</comment>
<comment type="interaction">
    <interactant intactId="EBI-711810">
        <id>O14503</id>
    </interactant>
    <interactant intactId="EBI-11741437">
        <id>Q08117-2</id>
        <label>TLE5</label>
    </interactant>
    <organismsDiffer>false</organismsDiffer>
    <experiments>3</experiments>
</comment>
<comment type="interaction">
    <interactant intactId="EBI-711810">
        <id>O14503</id>
    </interactant>
    <interactant intactId="EBI-2562000">
        <id>Q14106</id>
        <label>TOB2</label>
    </interactant>
    <organismsDiffer>false</organismsDiffer>
    <experiments>3</experiments>
</comment>
<comment type="interaction">
    <interactant intactId="EBI-711810">
        <id>O14503</id>
    </interactant>
    <interactant intactId="EBI-366083">
        <id>P04637</id>
        <label>TP53</label>
    </interactant>
    <organismsDiffer>false</organismsDiffer>
    <experiments>11</experiments>
</comment>
<comment type="interaction">
    <interactant intactId="EBI-711810">
        <id>O14503</id>
    </interactant>
    <interactant intactId="EBI-6447954">
        <id>Q5W5X9</id>
        <label>TTC23</label>
    </interactant>
    <organismsDiffer>false</organismsDiffer>
    <experiments>3</experiments>
</comment>
<comment type="interaction">
    <interactant intactId="EBI-711810">
        <id>O14503</id>
    </interactant>
    <interactant intactId="EBI-10309345">
        <id>Q9NX01</id>
        <label>TXNL4B</label>
    </interactant>
    <organismsDiffer>false</organismsDiffer>
    <experiments>3</experiments>
</comment>
<comment type="interaction">
    <interactant intactId="EBI-711810">
        <id>O14503</id>
    </interactant>
    <interactant intactId="EBI-80168">
        <id>P63279</id>
        <label>UBE2I</label>
    </interactant>
    <organismsDiffer>false</organismsDiffer>
    <experiments>3</experiments>
</comment>
<comment type="interaction">
    <interactant intactId="EBI-711810">
        <id>O14503</id>
    </interactant>
    <interactant intactId="EBI-11975223">
        <id>Q70EL1-9</id>
        <label>USP54</label>
    </interactant>
    <organismsDiffer>false</organismsDiffer>
    <experiments>3</experiments>
</comment>
<comment type="interaction">
    <interactant intactId="EBI-711810">
        <id>O14503</id>
    </interactant>
    <interactant intactId="EBI-2107455">
        <id>Q08AM6</id>
        <label>VAC14</label>
    </interactant>
    <organismsDiffer>false</organismsDiffer>
    <experiments>6</experiments>
</comment>
<comment type="interaction">
    <interactant intactId="EBI-711810">
        <id>O14503</id>
    </interactant>
    <interactant intactId="EBI-10191303">
        <id>O95231</id>
        <label>VENTX</label>
    </interactant>
    <organismsDiffer>false</organismsDiffer>
    <experiments>3</experiments>
</comment>
<comment type="interaction">
    <interactant intactId="EBI-711810">
        <id>O14503</id>
    </interactant>
    <interactant intactId="EBI-11745701">
        <id>P19544-6</id>
        <label>WT1</label>
    </interactant>
    <organismsDiffer>false</organismsDiffer>
    <experiments>3</experiments>
</comment>
<comment type="interaction">
    <interactant intactId="EBI-711810">
        <id>O14503</id>
    </interactant>
    <interactant intactId="EBI-10237226">
        <id>Q15911-2</id>
        <label>ZFHX3</label>
    </interactant>
    <organismsDiffer>false</organismsDiffer>
    <experiments>3</experiments>
</comment>
<comment type="interaction">
    <interactant intactId="EBI-711810">
        <id>O14503</id>
    </interactant>
    <interactant intactId="EBI-9675596">
        <id>P0C206</id>
    </interactant>
    <organismsDiffer>true</organismsDiffer>
    <experiments>3</experiments>
</comment>
<comment type="subcellular location">
    <subcellularLocation>
        <location evidence="12">Cytoplasm</location>
    </subcellularLocation>
    <subcellularLocation>
        <location evidence="5 12 13">Nucleus</location>
    </subcellularLocation>
    <text evidence="5">Predominantly localized in the nucleus (PubMed:11278694).</text>
</comment>
<comment type="tissue specificity">
    <text>Expressed in cartilage, spleen, intestine, lung, and to a lesser extent in heart, brain, liver, muscle and stomach.</text>
</comment>
<comment type="PTM">
    <text evidence="5">Ubiquitinated; which may lead to proteasomal degradation.</text>
</comment>
<comment type="PTM">
    <text evidence="5 12">Sumoylation inhibits its ubiquitination and promotes its negative regulation of the CLOCK-BMAL1 heterodimer transcriptional activator activity.</text>
</comment>
<gene>
    <name type="primary">BHLHE40</name>
    <name type="synonym">BHLHB2</name>
    <name evidence="15 16" type="synonym">DEC1</name>
    <name type="synonym">SHARP2</name>
    <name type="synonym">STRA13</name>
</gene>
<evidence type="ECO:0000250" key="1">
    <source>
        <dbReference type="UniProtKB" id="O35185"/>
    </source>
</evidence>
<evidence type="ECO:0000255" key="2">
    <source>
        <dbReference type="PROSITE-ProRule" id="PRU00380"/>
    </source>
</evidence>
<evidence type="ECO:0000255" key="3">
    <source>
        <dbReference type="PROSITE-ProRule" id="PRU00981"/>
    </source>
</evidence>
<evidence type="ECO:0000256" key="4">
    <source>
        <dbReference type="SAM" id="MobiDB-lite"/>
    </source>
</evidence>
<evidence type="ECO:0000269" key="5">
    <source>
    </source>
</evidence>
<evidence type="ECO:0000269" key="6">
    <source>
    </source>
</evidence>
<evidence type="ECO:0000269" key="7">
    <source>
    </source>
</evidence>
<evidence type="ECO:0000269" key="8">
    <source>
    </source>
</evidence>
<evidence type="ECO:0000269" key="9">
    <source>
    </source>
</evidence>
<evidence type="ECO:0000269" key="10">
    <source>
    </source>
</evidence>
<evidence type="ECO:0000269" key="11">
    <source>
    </source>
</evidence>
<evidence type="ECO:0000269" key="12">
    <source>
    </source>
</evidence>
<evidence type="ECO:0000269" key="13">
    <source>
    </source>
</evidence>
<evidence type="ECO:0000269" key="14">
    <source>
    </source>
</evidence>
<evidence type="ECO:0000303" key="15">
    <source>
    </source>
</evidence>
<evidence type="ECO:0000303" key="16">
    <source>
    </source>
</evidence>
<evidence type="ECO:0007744" key="17">
    <source>
    </source>
</evidence>
<evidence type="ECO:0007744" key="18">
    <source>
    </source>
</evidence>
<evidence type="ECO:0007744" key="19">
    <source>
    </source>
</evidence>
<evidence type="ECO:0007744" key="20">
    <source>
    </source>
</evidence>
<evidence type="ECO:0007744" key="21">
    <source>
    </source>
</evidence>
<evidence type="ECO:0007744" key="22">
    <source>
    </source>
</evidence>
<keyword id="KW-0090">Biological rhythms</keyword>
<keyword id="KW-0963">Cytoplasm</keyword>
<keyword id="KW-0238">DNA-binding</keyword>
<keyword id="KW-1017">Isopeptide bond</keyword>
<keyword id="KW-0539">Nucleus</keyword>
<keyword id="KW-0597">Phosphoprotein</keyword>
<keyword id="KW-1267">Proteomics identification</keyword>
<keyword id="KW-1185">Reference proteome</keyword>
<keyword id="KW-0678">Repressor</keyword>
<keyword id="KW-0804">Transcription</keyword>
<keyword id="KW-0805">Transcription regulation</keyword>
<keyword id="KW-0832">Ubl conjugation</keyword>
<accession>O14503</accession>
<accession>Q96TD3</accession>
<organism>
    <name type="scientific">Homo sapiens</name>
    <name type="common">Human</name>
    <dbReference type="NCBI Taxonomy" id="9606"/>
    <lineage>
        <taxon>Eukaryota</taxon>
        <taxon>Metazoa</taxon>
        <taxon>Chordata</taxon>
        <taxon>Craniata</taxon>
        <taxon>Vertebrata</taxon>
        <taxon>Euteleostomi</taxon>
        <taxon>Mammalia</taxon>
        <taxon>Eutheria</taxon>
        <taxon>Euarchontoglires</taxon>
        <taxon>Primates</taxon>
        <taxon>Haplorrhini</taxon>
        <taxon>Catarrhini</taxon>
        <taxon>Hominidae</taxon>
        <taxon>Homo</taxon>
    </lineage>
</organism>
<protein>
    <recommendedName>
        <fullName>Class E basic helix-loop-helix protein 40</fullName>
        <shortName>bHLHe40</shortName>
    </recommendedName>
    <alternativeName>
        <fullName>Class B basic helix-loop-helix protein 2</fullName>
        <shortName>bHLHb2</shortName>
    </alternativeName>
    <alternativeName>
        <fullName evidence="15 16">Differentially expressed in chondrocytes protein 1</fullName>
        <shortName evidence="15 16">DEC1</shortName>
    </alternativeName>
    <alternativeName>
        <fullName>Enhancer-of-split and hairy-related protein 2</fullName>
        <shortName>SHARP-2</shortName>
    </alternativeName>
    <alternativeName>
        <fullName>Stimulated by retinoic acid gene 13 protein</fullName>
    </alternativeName>
</protein>
<feature type="chain" id="PRO_0000127144" description="Class E basic helix-loop-helix protein 40">
    <location>
        <begin position="1"/>
        <end position="412"/>
    </location>
</feature>
<feature type="domain" description="bHLH" evidence="3">
    <location>
        <begin position="52"/>
        <end position="107"/>
    </location>
</feature>
<feature type="domain" description="Orange" evidence="2">
    <location>
        <begin position="142"/>
        <end position="175"/>
    </location>
</feature>
<feature type="region of interest" description="Essential for interaction with BMAL1, E-box binding and repressor activity against the CLOCK-BMAL1 heterodimer">
    <location>
        <begin position="1"/>
        <end position="139"/>
    </location>
</feature>
<feature type="region of interest" description="Necessary for interaction with RXRA and repressor activity against RXRA" evidence="11">
    <location>
        <begin position="75"/>
        <end position="79"/>
    </location>
</feature>
<feature type="region of interest" description="Disordered" evidence="4">
    <location>
        <begin position="182"/>
        <end position="303"/>
    </location>
</feature>
<feature type="compositionally biased region" description="Basic and acidic residues" evidence="4">
    <location>
        <begin position="248"/>
        <end position="271"/>
    </location>
</feature>
<feature type="modified residue" description="Phosphoserine" evidence="17">
    <location>
        <position position="235"/>
    </location>
</feature>
<feature type="modified residue" description="Phosphoserine" evidence="1">
    <location>
        <position position="383"/>
    </location>
</feature>
<feature type="cross-link" description="Glycyl lysine isopeptide (Lys-Gly) (interchain with G-Cter in SUMO1, SUMO2 and SUMO3)" evidence="12">
    <location>
        <position position="159"/>
    </location>
</feature>
<feature type="cross-link" description="Glycyl lysine isopeptide (Lys-Gly) (interchain with G-Cter in SUMO2)" evidence="22">
    <location>
        <position position="167"/>
    </location>
</feature>
<feature type="cross-link" description="Glycyl lysine isopeptide (Lys-Gly) (interchain with G-Cter in SUMO1); alternate" evidence="18">
    <location>
        <position position="279"/>
    </location>
</feature>
<feature type="cross-link" description="Glycyl lysine isopeptide (Lys-Gly) (interchain with G-Cter in SUMO1, SUMO2 and SUMO3); alternate">
    <location>
        <position position="279"/>
    </location>
</feature>
<feature type="cross-link" description="Glycyl lysine isopeptide (Lys-Gly) (interchain with G-Cter in SUMO2); alternate" evidence="19 20 21 22">
    <location>
        <position position="279"/>
    </location>
</feature>
<feature type="cross-link" description="Glycyl lysine isopeptide (Lys-Gly) (interchain with G-Cter in SUMO2)" evidence="22">
    <location>
        <position position="288"/>
    </location>
</feature>
<feature type="mutagenesis site" description="No loss of repressor activity against NR0B2." evidence="13">
    <original>P</original>
    <variation>A</variation>
    <location>
        <position position="56"/>
    </location>
</feature>
<feature type="mutagenesis site" description="No effect on its interaction with BMAL1 or its repressor activity against the CLOCK-BMAL1 heterodimer. Significant reduction in E-box binding." evidence="9">
    <original>H</original>
    <variation>A</variation>
    <location>
        <position position="57"/>
    </location>
</feature>
<feature type="mutagenesis site" description="Loss of repressor activity against NR0B2." evidence="13">
    <original>R</original>
    <variation>A</variation>
    <location>
        <position position="58"/>
    </location>
</feature>
<feature type="mutagenesis site" description="Loss of interaction with BMAL1 and E-box binding. Significant reduction in its repressor activity against the CLOCK-BMAL1 heterodimer." evidence="9">
    <original>R</original>
    <variation>A</variation>
    <location>
        <position position="65"/>
    </location>
</feature>
<feature type="mutagenesis site" description="Abolishes RXRA repression." evidence="11">
    <original>LL</original>
    <variation>AA</variation>
    <location>
        <begin position="78"/>
        <end position="79"/>
    </location>
</feature>
<feature type="mutagenesis site" description="Partial loss of sumoylation. Complete loss of sumoylation; when associated with R-279." evidence="12">
    <original>K</original>
    <variation>R</variation>
    <location>
        <position position="159"/>
    </location>
</feature>
<feature type="mutagenesis site" description="Partial loss of sumoylation. Complete loss of sumoylation; when associated with R-159." evidence="12">
    <original>K</original>
    <variation>R</variation>
    <location>
        <position position="279"/>
    </location>
</feature>
<dbReference type="EMBL" id="AB004066">
    <property type="protein sequence ID" value="BAA21720.1"/>
    <property type="molecule type" value="mRNA"/>
</dbReference>
<dbReference type="EMBL" id="AB043885">
    <property type="protein sequence ID" value="BAB18565.1"/>
    <property type="molecule type" value="Genomic_DNA"/>
</dbReference>
<dbReference type="EMBL" id="BC082238">
    <property type="protein sequence ID" value="AAH82238.1"/>
    <property type="molecule type" value="mRNA"/>
</dbReference>
<dbReference type="EMBL" id="AH010709">
    <property type="protein sequence ID" value="AAK49525.1"/>
    <property type="molecule type" value="Genomic_DNA"/>
</dbReference>
<dbReference type="CCDS" id="CCDS2565.1"/>
<dbReference type="PIR" id="JC5547">
    <property type="entry name" value="JC5547"/>
</dbReference>
<dbReference type="RefSeq" id="NP_003661.1">
    <property type="nucleotide sequence ID" value="NM_003670.3"/>
</dbReference>
<dbReference type="RefSeq" id="XP_054204135.1">
    <property type="nucleotide sequence ID" value="XM_054348160.1"/>
</dbReference>
<dbReference type="RefSeq" id="XP_054204136.1">
    <property type="nucleotide sequence ID" value="XM_054348161.1"/>
</dbReference>
<dbReference type="RefSeq" id="XP_054204137.1">
    <property type="nucleotide sequence ID" value="XM_054348162.1"/>
</dbReference>
<dbReference type="SMR" id="O14503"/>
<dbReference type="BioGRID" id="114123">
    <property type="interactions" value="118"/>
</dbReference>
<dbReference type="DIP" id="DIP-36698N"/>
<dbReference type="FunCoup" id="O14503">
    <property type="interactions" value="4408"/>
</dbReference>
<dbReference type="IntAct" id="O14503">
    <property type="interactions" value="124"/>
</dbReference>
<dbReference type="MINT" id="O14503"/>
<dbReference type="STRING" id="9606.ENSP00000256495"/>
<dbReference type="MoonDB" id="O14503">
    <property type="type" value="Predicted"/>
</dbReference>
<dbReference type="iPTMnet" id="O14503"/>
<dbReference type="PhosphoSitePlus" id="O14503"/>
<dbReference type="BioMuta" id="BHLHE40"/>
<dbReference type="jPOST" id="O14503"/>
<dbReference type="MassIVE" id="O14503"/>
<dbReference type="PaxDb" id="9606-ENSP00000256495"/>
<dbReference type="PeptideAtlas" id="O14503"/>
<dbReference type="ProteomicsDB" id="48045"/>
<dbReference type="Pumba" id="O14503"/>
<dbReference type="Antibodypedia" id="10051">
    <property type="antibodies" value="347 antibodies from 33 providers"/>
</dbReference>
<dbReference type="DNASU" id="8553"/>
<dbReference type="Ensembl" id="ENST00000256495.4">
    <property type="protein sequence ID" value="ENSP00000256495.3"/>
    <property type="gene ID" value="ENSG00000134107.5"/>
</dbReference>
<dbReference type="GeneID" id="8553"/>
<dbReference type="KEGG" id="hsa:8553"/>
<dbReference type="MANE-Select" id="ENST00000256495.4">
    <property type="protein sequence ID" value="ENSP00000256495.3"/>
    <property type="RefSeq nucleotide sequence ID" value="NM_003670.3"/>
    <property type="RefSeq protein sequence ID" value="NP_003661.1"/>
</dbReference>
<dbReference type="AGR" id="HGNC:1046"/>
<dbReference type="CTD" id="8553"/>
<dbReference type="DisGeNET" id="8553"/>
<dbReference type="GeneCards" id="BHLHE40"/>
<dbReference type="HGNC" id="HGNC:1046">
    <property type="gene designation" value="BHLHE40"/>
</dbReference>
<dbReference type="HPA" id="ENSG00000134107">
    <property type="expression patterns" value="Low tissue specificity"/>
</dbReference>
<dbReference type="MIM" id="604256">
    <property type="type" value="gene"/>
</dbReference>
<dbReference type="neXtProt" id="NX_O14503"/>
<dbReference type="OpenTargets" id="ENSG00000134107"/>
<dbReference type="PharmGKB" id="PA25347"/>
<dbReference type="VEuPathDB" id="HostDB:ENSG00000134107"/>
<dbReference type="eggNOG" id="KOG4304">
    <property type="taxonomic scope" value="Eukaryota"/>
</dbReference>
<dbReference type="GeneTree" id="ENSGT00940000158384"/>
<dbReference type="HOGENOM" id="CLU_049895_0_1_1"/>
<dbReference type="InParanoid" id="O14503"/>
<dbReference type="OMA" id="FHVCAQE"/>
<dbReference type="OrthoDB" id="690068at2759"/>
<dbReference type="PAN-GO" id="O14503">
    <property type="GO annotations" value="7 GO annotations based on evolutionary models"/>
</dbReference>
<dbReference type="PhylomeDB" id="O14503"/>
<dbReference type="TreeFam" id="TF330859"/>
<dbReference type="PathwayCommons" id="O14503"/>
<dbReference type="Reactome" id="R-HSA-1368108">
    <property type="pathway name" value="BMAL1:CLOCK,NPAS2 activates circadian gene expression"/>
</dbReference>
<dbReference type="SignaLink" id="O14503"/>
<dbReference type="SIGNOR" id="O14503"/>
<dbReference type="BioGRID-ORCS" id="8553">
    <property type="hits" value="22 hits in 1189 CRISPR screens"/>
</dbReference>
<dbReference type="ChiTaRS" id="BHLHE40">
    <property type="organism name" value="human"/>
</dbReference>
<dbReference type="GeneWiki" id="BHLHB2"/>
<dbReference type="GenomeRNAi" id="8553"/>
<dbReference type="Pharos" id="O14503">
    <property type="development level" value="Tbio"/>
</dbReference>
<dbReference type="PRO" id="PR:O14503"/>
<dbReference type="Proteomes" id="UP000005640">
    <property type="component" value="Chromosome 3"/>
</dbReference>
<dbReference type="RNAct" id="O14503">
    <property type="molecule type" value="protein"/>
</dbReference>
<dbReference type="Bgee" id="ENSG00000134107">
    <property type="expression patterns" value="Expressed in saphenous vein and 206 other cell types or tissues"/>
</dbReference>
<dbReference type="ExpressionAtlas" id="O14503">
    <property type="expression patterns" value="baseline and differential"/>
</dbReference>
<dbReference type="GO" id="GO:0000785">
    <property type="term" value="C:chromatin"/>
    <property type="evidence" value="ECO:0000247"/>
    <property type="project" value="NTNU_SB"/>
</dbReference>
<dbReference type="GO" id="GO:0005737">
    <property type="term" value="C:cytoplasm"/>
    <property type="evidence" value="ECO:0007669"/>
    <property type="project" value="UniProtKB-SubCell"/>
</dbReference>
<dbReference type="GO" id="GO:0016604">
    <property type="term" value="C:nuclear body"/>
    <property type="evidence" value="ECO:0000314"/>
    <property type="project" value="HPA"/>
</dbReference>
<dbReference type="GO" id="GO:0005634">
    <property type="term" value="C:nucleus"/>
    <property type="evidence" value="ECO:0000314"/>
    <property type="project" value="UniProtKB"/>
</dbReference>
<dbReference type="GO" id="GO:0043425">
    <property type="term" value="F:bHLH transcription factor binding"/>
    <property type="evidence" value="ECO:0000353"/>
    <property type="project" value="BHF-UCL"/>
</dbReference>
<dbReference type="GO" id="GO:0003700">
    <property type="term" value="F:DNA-binding transcription factor activity"/>
    <property type="evidence" value="ECO:0000303"/>
    <property type="project" value="UniProtKB"/>
</dbReference>
<dbReference type="GO" id="GO:0000981">
    <property type="term" value="F:DNA-binding transcription factor activity, RNA polymerase II-specific"/>
    <property type="evidence" value="ECO:0000314"/>
    <property type="project" value="BHF-UCL"/>
</dbReference>
<dbReference type="GO" id="GO:0001227">
    <property type="term" value="F:DNA-binding transcription repressor activity, RNA polymerase II-specific"/>
    <property type="evidence" value="ECO:0000314"/>
    <property type="project" value="BHF-UCL"/>
</dbReference>
<dbReference type="GO" id="GO:0070888">
    <property type="term" value="F:E-box binding"/>
    <property type="evidence" value="ECO:0000314"/>
    <property type="project" value="UniProtKB"/>
</dbReference>
<dbReference type="GO" id="GO:0043426">
    <property type="term" value="F:MRF binding"/>
    <property type="evidence" value="ECO:0000250"/>
    <property type="project" value="BHF-UCL"/>
</dbReference>
<dbReference type="GO" id="GO:0019904">
    <property type="term" value="F:protein domain specific binding"/>
    <property type="evidence" value="ECO:0000353"/>
    <property type="project" value="BHF-UCL"/>
</dbReference>
<dbReference type="GO" id="GO:0046982">
    <property type="term" value="F:protein heterodimerization activity"/>
    <property type="evidence" value="ECO:0000353"/>
    <property type="project" value="BHF-UCL"/>
</dbReference>
<dbReference type="GO" id="GO:0042803">
    <property type="term" value="F:protein homodimerization activity"/>
    <property type="evidence" value="ECO:0000314"/>
    <property type="project" value="BHF-UCL"/>
</dbReference>
<dbReference type="GO" id="GO:0000978">
    <property type="term" value="F:RNA polymerase II cis-regulatory region sequence-specific DNA binding"/>
    <property type="evidence" value="ECO:0000318"/>
    <property type="project" value="GO_Central"/>
</dbReference>
<dbReference type="GO" id="GO:0061629">
    <property type="term" value="F:RNA polymerase II-specific DNA-binding transcription factor binding"/>
    <property type="evidence" value="ECO:0000250"/>
    <property type="project" value="BHF-UCL"/>
</dbReference>
<dbReference type="GO" id="GO:1990837">
    <property type="term" value="F:sequence-specific double-stranded DNA binding"/>
    <property type="evidence" value="ECO:0000314"/>
    <property type="project" value="ARUK-UCL"/>
</dbReference>
<dbReference type="GO" id="GO:0032922">
    <property type="term" value="P:circadian regulation of gene expression"/>
    <property type="evidence" value="ECO:0000314"/>
    <property type="project" value="BHF-UCL"/>
</dbReference>
<dbReference type="GO" id="GO:0007623">
    <property type="term" value="P:circadian rhythm"/>
    <property type="evidence" value="ECO:0000314"/>
    <property type="project" value="UniProtKB"/>
</dbReference>
<dbReference type="GO" id="GO:0043153">
    <property type="term" value="P:entrainment of circadian clock by photoperiod"/>
    <property type="evidence" value="ECO:0000250"/>
    <property type="project" value="BHF-UCL"/>
</dbReference>
<dbReference type="GO" id="GO:0045892">
    <property type="term" value="P:negative regulation of DNA-templated transcription"/>
    <property type="evidence" value="ECO:0000314"/>
    <property type="project" value="UniProtKB"/>
</dbReference>
<dbReference type="GO" id="GO:0000122">
    <property type="term" value="P:negative regulation of transcription by RNA polymerase II"/>
    <property type="evidence" value="ECO:0000314"/>
    <property type="project" value="BHF-UCL"/>
</dbReference>
<dbReference type="GO" id="GO:0042752">
    <property type="term" value="P:regulation of circadian rhythm"/>
    <property type="evidence" value="ECO:0000250"/>
    <property type="project" value="UniProtKB"/>
</dbReference>
<dbReference type="GO" id="GO:0006355">
    <property type="term" value="P:regulation of DNA-templated transcription"/>
    <property type="evidence" value="ECO:0000303"/>
    <property type="project" value="UniProtKB"/>
</dbReference>
<dbReference type="GO" id="GO:0050767">
    <property type="term" value="P:regulation of neurogenesis"/>
    <property type="evidence" value="ECO:0000318"/>
    <property type="project" value="GO_Central"/>
</dbReference>
<dbReference type="CDD" id="cd19749">
    <property type="entry name" value="bHLH-O_DEC1"/>
    <property type="match status" value="1"/>
</dbReference>
<dbReference type="FunFam" id="4.10.280.10:FF:000020">
    <property type="entry name" value="class E basic helix-loop-helix protein 40"/>
    <property type="match status" value="1"/>
</dbReference>
<dbReference type="Gene3D" id="6.10.250.980">
    <property type="match status" value="1"/>
</dbReference>
<dbReference type="Gene3D" id="4.10.280.10">
    <property type="entry name" value="Helix-loop-helix DNA-binding domain"/>
    <property type="match status" value="1"/>
</dbReference>
<dbReference type="InterPro" id="IPR011598">
    <property type="entry name" value="bHLH_dom"/>
</dbReference>
<dbReference type="InterPro" id="IPR050370">
    <property type="entry name" value="HES_HEY"/>
</dbReference>
<dbReference type="InterPro" id="IPR036638">
    <property type="entry name" value="HLH_DNA-bd_sf"/>
</dbReference>
<dbReference type="InterPro" id="IPR003650">
    <property type="entry name" value="Orange_dom"/>
</dbReference>
<dbReference type="PANTHER" id="PTHR10985">
    <property type="entry name" value="BASIC HELIX-LOOP-HELIX TRANSCRIPTION FACTOR, HES-RELATED"/>
    <property type="match status" value="1"/>
</dbReference>
<dbReference type="Pfam" id="PF07527">
    <property type="entry name" value="Hairy_orange"/>
    <property type="match status" value="1"/>
</dbReference>
<dbReference type="Pfam" id="PF00010">
    <property type="entry name" value="HLH"/>
    <property type="match status" value="1"/>
</dbReference>
<dbReference type="SMART" id="SM00353">
    <property type="entry name" value="HLH"/>
    <property type="match status" value="1"/>
</dbReference>
<dbReference type="SMART" id="SM00511">
    <property type="entry name" value="ORANGE"/>
    <property type="match status" value="1"/>
</dbReference>
<dbReference type="SUPFAM" id="SSF47459">
    <property type="entry name" value="HLH, helix-loop-helix DNA-binding domain"/>
    <property type="match status" value="1"/>
</dbReference>
<dbReference type="SUPFAM" id="SSF158457">
    <property type="entry name" value="Orange domain-like"/>
    <property type="match status" value="1"/>
</dbReference>
<dbReference type="PROSITE" id="PS50888">
    <property type="entry name" value="BHLH"/>
    <property type="match status" value="1"/>
</dbReference>
<dbReference type="PROSITE" id="PS51054">
    <property type="entry name" value="ORANGE"/>
    <property type="match status" value="1"/>
</dbReference>
<proteinExistence type="evidence at protein level"/>
<name>BHE40_HUMAN</name>